<sequence length="327" mass="35411">MGGMKSCYHEPVLAPESVSMLVRGPGLYLDGTLGGGGHSLAILCELERSGWLEGSLLLGIDQDDEALQEAGERLADYREHAVALKGNFGNIAALSAREAGSRGMEPQASGILLDLGVSSHQLDVPLRGFSYMQPGPLDMRMDSGATGTAADILNTAPEAELASIFFRYGEEPLSRVIARAVTTRRVEKGPFHTTDELADLVRSVVFGRERVMKSLSRVFQALRIAVNQELEVLERVLGDGVMLLKPGGRMAVISYHSLEDRMVKRFFSSLTTADWGPKGVGLREPVRPAAAIAVTGKPVRAGAEEVARNPRARSAKMRVIEKMENRE</sequence>
<accession>A4SH10</accession>
<proteinExistence type="inferred from homology"/>
<evidence type="ECO:0000255" key="1">
    <source>
        <dbReference type="HAMAP-Rule" id="MF_01007"/>
    </source>
</evidence>
<protein>
    <recommendedName>
        <fullName evidence="1">Ribosomal RNA small subunit methyltransferase H</fullName>
        <ecNumber evidence="1">2.1.1.199</ecNumber>
    </recommendedName>
    <alternativeName>
        <fullName evidence="1">16S rRNA m(4)C1402 methyltransferase</fullName>
    </alternativeName>
    <alternativeName>
        <fullName evidence="1">rRNA (cytosine-N(4)-)-methyltransferase RsmH</fullName>
    </alternativeName>
</protein>
<dbReference type="EC" id="2.1.1.199" evidence="1"/>
<dbReference type="EMBL" id="CP000607">
    <property type="protein sequence ID" value="ABP37769.1"/>
    <property type="molecule type" value="Genomic_DNA"/>
</dbReference>
<dbReference type="SMR" id="A4SH10"/>
<dbReference type="STRING" id="290318.Cvib_1761"/>
<dbReference type="KEGG" id="pvi:Cvib_1761"/>
<dbReference type="eggNOG" id="COG0275">
    <property type="taxonomic scope" value="Bacteria"/>
</dbReference>
<dbReference type="HOGENOM" id="CLU_038422_3_0_10"/>
<dbReference type="OrthoDB" id="9806637at2"/>
<dbReference type="GO" id="GO:0005737">
    <property type="term" value="C:cytoplasm"/>
    <property type="evidence" value="ECO:0007669"/>
    <property type="project" value="UniProtKB-SubCell"/>
</dbReference>
<dbReference type="GO" id="GO:0071424">
    <property type="term" value="F:rRNA (cytosine-N4-)-methyltransferase activity"/>
    <property type="evidence" value="ECO:0007669"/>
    <property type="project" value="UniProtKB-UniRule"/>
</dbReference>
<dbReference type="GO" id="GO:0070475">
    <property type="term" value="P:rRNA base methylation"/>
    <property type="evidence" value="ECO:0007669"/>
    <property type="project" value="UniProtKB-UniRule"/>
</dbReference>
<dbReference type="Gene3D" id="1.10.150.170">
    <property type="entry name" value="Putative methyltransferase TM0872, insert domain"/>
    <property type="match status" value="1"/>
</dbReference>
<dbReference type="Gene3D" id="3.40.50.150">
    <property type="entry name" value="Vaccinia Virus protein VP39"/>
    <property type="match status" value="1"/>
</dbReference>
<dbReference type="HAMAP" id="MF_01007">
    <property type="entry name" value="16SrRNA_methyltr_H"/>
    <property type="match status" value="1"/>
</dbReference>
<dbReference type="InterPro" id="IPR002903">
    <property type="entry name" value="RsmH"/>
</dbReference>
<dbReference type="InterPro" id="IPR023397">
    <property type="entry name" value="SAM-dep_MeTrfase_MraW_recog"/>
</dbReference>
<dbReference type="InterPro" id="IPR029063">
    <property type="entry name" value="SAM-dependent_MTases_sf"/>
</dbReference>
<dbReference type="NCBIfam" id="TIGR00006">
    <property type="entry name" value="16S rRNA (cytosine(1402)-N(4))-methyltransferase RsmH"/>
    <property type="match status" value="1"/>
</dbReference>
<dbReference type="PANTHER" id="PTHR11265:SF0">
    <property type="entry name" value="12S RRNA N4-METHYLCYTIDINE METHYLTRANSFERASE"/>
    <property type="match status" value="1"/>
</dbReference>
<dbReference type="PANTHER" id="PTHR11265">
    <property type="entry name" value="S-ADENOSYL-METHYLTRANSFERASE MRAW"/>
    <property type="match status" value="1"/>
</dbReference>
<dbReference type="Pfam" id="PF01795">
    <property type="entry name" value="Methyltransf_5"/>
    <property type="match status" value="1"/>
</dbReference>
<dbReference type="PIRSF" id="PIRSF004486">
    <property type="entry name" value="MraW"/>
    <property type="match status" value="1"/>
</dbReference>
<dbReference type="SUPFAM" id="SSF81799">
    <property type="entry name" value="Putative methyltransferase TM0872, insert domain"/>
    <property type="match status" value="1"/>
</dbReference>
<dbReference type="SUPFAM" id="SSF53335">
    <property type="entry name" value="S-adenosyl-L-methionine-dependent methyltransferases"/>
    <property type="match status" value="1"/>
</dbReference>
<gene>
    <name evidence="1" type="primary">rsmH</name>
    <name type="synonym">mraW</name>
    <name type="ordered locus">Cvib_1761</name>
</gene>
<name>RSMH_CHLPM</name>
<feature type="chain" id="PRO_0000387046" description="Ribosomal RNA small subunit methyltransferase H">
    <location>
        <begin position="1"/>
        <end position="327"/>
    </location>
</feature>
<feature type="binding site" evidence="1">
    <location>
        <begin position="36"/>
        <end position="38"/>
    </location>
    <ligand>
        <name>S-adenosyl-L-methionine</name>
        <dbReference type="ChEBI" id="CHEBI:59789"/>
    </ligand>
</feature>
<feature type="binding site" evidence="1">
    <location>
        <position position="61"/>
    </location>
    <ligand>
        <name>S-adenosyl-L-methionine</name>
        <dbReference type="ChEBI" id="CHEBI:59789"/>
    </ligand>
</feature>
<feature type="binding site" evidence="1">
    <location>
        <position position="88"/>
    </location>
    <ligand>
        <name>S-adenosyl-L-methionine</name>
        <dbReference type="ChEBI" id="CHEBI:59789"/>
    </ligand>
</feature>
<feature type="binding site" evidence="1">
    <location>
        <position position="114"/>
    </location>
    <ligand>
        <name>S-adenosyl-L-methionine</name>
        <dbReference type="ChEBI" id="CHEBI:59789"/>
    </ligand>
</feature>
<feature type="binding site" evidence="1">
    <location>
        <position position="121"/>
    </location>
    <ligand>
        <name>S-adenosyl-L-methionine</name>
        <dbReference type="ChEBI" id="CHEBI:59789"/>
    </ligand>
</feature>
<keyword id="KW-0963">Cytoplasm</keyword>
<keyword id="KW-0489">Methyltransferase</keyword>
<keyword id="KW-0698">rRNA processing</keyword>
<keyword id="KW-0949">S-adenosyl-L-methionine</keyword>
<keyword id="KW-0808">Transferase</keyword>
<reference key="1">
    <citation type="submission" date="2007-03" db="EMBL/GenBank/DDBJ databases">
        <title>Complete sequence of Prosthecochloris vibrioformis DSM 265.</title>
        <authorList>
            <consortium name="US DOE Joint Genome Institute"/>
            <person name="Copeland A."/>
            <person name="Lucas S."/>
            <person name="Lapidus A."/>
            <person name="Barry K."/>
            <person name="Detter J.C."/>
            <person name="Glavina del Rio T."/>
            <person name="Hammon N."/>
            <person name="Israni S."/>
            <person name="Pitluck S."/>
            <person name="Schmutz J."/>
            <person name="Larimer F."/>
            <person name="Land M."/>
            <person name="Hauser L."/>
            <person name="Mikhailova N."/>
            <person name="Li T."/>
            <person name="Overmann J."/>
            <person name="Schuster S.C."/>
            <person name="Bryant D.A."/>
            <person name="Richardson P."/>
        </authorList>
    </citation>
    <scope>NUCLEOTIDE SEQUENCE [LARGE SCALE GENOMIC DNA]</scope>
    <source>
        <strain>DSM 265 / 1930</strain>
    </source>
</reference>
<organism>
    <name type="scientific">Chlorobium phaeovibrioides (strain DSM 265 / 1930)</name>
    <name type="common">Prosthecochloris vibrioformis (strain DSM 265)</name>
    <dbReference type="NCBI Taxonomy" id="290318"/>
    <lineage>
        <taxon>Bacteria</taxon>
        <taxon>Pseudomonadati</taxon>
        <taxon>Chlorobiota</taxon>
        <taxon>Chlorobiia</taxon>
        <taxon>Chlorobiales</taxon>
        <taxon>Chlorobiaceae</taxon>
        <taxon>Chlorobium/Pelodictyon group</taxon>
        <taxon>Chlorobium</taxon>
    </lineage>
</organism>
<comment type="function">
    <text evidence="1">Specifically methylates the N4 position of cytidine in position 1402 (C1402) of 16S rRNA.</text>
</comment>
<comment type="catalytic activity">
    <reaction evidence="1">
        <text>cytidine(1402) in 16S rRNA + S-adenosyl-L-methionine = N(4)-methylcytidine(1402) in 16S rRNA + S-adenosyl-L-homocysteine + H(+)</text>
        <dbReference type="Rhea" id="RHEA:42928"/>
        <dbReference type="Rhea" id="RHEA-COMP:10286"/>
        <dbReference type="Rhea" id="RHEA-COMP:10287"/>
        <dbReference type="ChEBI" id="CHEBI:15378"/>
        <dbReference type="ChEBI" id="CHEBI:57856"/>
        <dbReference type="ChEBI" id="CHEBI:59789"/>
        <dbReference type="ChEBI" id="CHEBI:74506"/>
        <dbReference type="ChEBI" id="CHEBI:82748"/>
        <dbReference type="EC" id="2.1.1.199"/>
    </reaction>
</comment>
<comment type="subcellular location">
    <subcellularLocation>
        <location evidence="1">Cytoplasm</location>
    </subcellularLocation>
</comment>
<comment type="similarity">
    <text evidence="1">Belongs to the methyltransferase superfamily. RsmH family.</text>
</comment>